<organism>
    <name type="scientific">Mus musculus</name>
    <name type="common">Mouse</name>
    <dbReference type="NCBI Taxonomy" id="10090"/>
    <lineage>
        <taxon>Eukaryota</taxon>
        <taxon>Metazoa</taxon>
        <taxon>Chordata</taxon>
        <taxon>Craniata</taxon>
        <taxon>Vertebrata</taxon>
        <taxon>Euteleostomi</taxon>
        <taxon>Mammalia</taxon>
        <taxon>Eutheria</taxon>
        <taxon>Euarchontoglires</taxon>
        <taxon>Glires</taxon>
        <taxon>Rodentia</taxon>
        <taxon>Myomorpha</taxon>
        <taxon>Muroidea</taxon>
        <taxon>Muridae</taxon>
        <taxon>Murinae</taxon>
        <taxon>Mus</taxon>
        <taxon>Mus</taxon>
    </lineage>
</organism>
<keyword id="KW-0217">Developmental protein</keyword>
<keyword id="KW-0221">Differentiation</keyword>
<keyword id="KW-0238">DNA-binding</keyword>
<keyword id="KW-0479">Metal-binding</keyword>
<keyword id="KW-0539">Nucleus</keyword>
<keyword id="KW-1185">Reference proteome</keyword>
<keyword id="KW-0726">Sexual differentiation</keyword>
<keyword id="KW-0804">Transcription</keyword>
<keyword id="KW-0805">Transcription regulation</keyword>
<keyword id="KW-0862">Zinc</keyword>
<reference key="1">
    <citation type="journal article" date="2005" name="Science">
        <title>The transcriptional landscape of the mammalian genome.</title>
        <authorList>
            <person name="Carninci P."/>
            <person name="Kasukawa T."/>
            <person name="Katayama S."/>
            <person name="Gough J."/>
            <person name="Frith M.C."/>
            <person name="Maeda N."/>
            <person name="Oyama R."/>
            <person name="Ravasi T."/>
            <person name="Lenhard B."/>
            <person name="Wells C."/>
            <person name="Kodzius R."/>
            <person name="Shimokawa K."/>
            <person name="Bajic V.B."/>
            <person name="Brenner S.E."/>
            <person name="Batalov S."/>
            <person name="Forrest A.R."/>
            <person name="Zavolan M."/>
            <person name="Davis M.J."/>
            <person name="Wilming L.G."/>
            <person name="Aidinis V."/>
            <person name="Allen J.E."/>
            <person name="Ambesi-Impiombato A."/>
            <person name="Apweiler R."/>
            <person name="Aturaliya R.N."/>
            <person name="Bailey T.L."/>
            <person name="Bansal M."/>
            <person name="Baxter L."/>
            <person name="Beisel K.W."/>
            <person name="Bersano T."/>
            <person name="Bono H."/>
            <person name="Chalk A.M."/>
            <person name="Chiu K.P."/>
            <person name="Choudhary V."/>
            <person name="Christoffels A."/>
            <person name="Clutterbuck D.R."/>
            <person name="Crowe M.L."/>
            <person name="Dalla E."/>
            <person name="Dalrymple B.P."/>
            <person name="de Bono B."/>
            <person name="Della Gatta G."/>
            <person name="di Bernardo D."/>
            <person name="Down T."/>
            <person name="Engstrom P."/>
            <person name="Fagiolini M."/>
            <person name="Faulkner G."/>
            <person name="Fletcher C.F."/>
            <person name="Fukushima T."/>
            <person name="Furuno M."/>
            <person name="Futaki S."/>
            <person name="Gariboldi M."/>
            <person name="Georgii-Hemming P."/>
            <person name="Gingeras T.R."/>
            <person name="Gojobori T."/>
            <person name="Green R.E."/>
            <person name="Gustincich S."/>
            <person name="Harbers M."/>
            <person name="Hayashi Y."/>
            <person name="Hensch T.K."/>
            <person name="Hirokawa N."/>
            <person name="Hill D."/>
            <person name="Huminiecki L."/>
            <person name="Iacono M."/>
            <person name="Ikeo K."/>
            <person name="Iwama A."/>
            <person name="Ishikawa T."/>
            <person name="Jakt M."/>
            <person name="Kanapin A."/>
            <person name="Katoh M."/>
            <person name="Kawasawa Y."/>
            <person name="Kelso J."/>
            <person name="Kitamura H."/>
            <person name="Kitano H."/>
            <person name="Kollias G."/>
            <person name="Krishnan S.P."/>
            <person name="Kruger A."/>
            <person name="Kummerfeld S.K."/>
            <person name="Kurochkin I.V."/>
            <person name="Lareau L.F."/>
            <person name="Lazarevic D."/>
            <person name="Lipovich L."/>
            <person name="Liu J."/>
            <person name="Liuni S."/>
            <person name="McWilliam S."/>
            <person name="Madan Babu M."/>
            <person name="Madera M."/>
            <person name="Marchionni L."/>
            <person name="Matsuda H."/>
            <person name="Matsuzawa S."/>
            <person name="Miki H."/>
            <person name="Mignone F."/>
            <person name="Miyake S."/>
            <person name="Morris K."/>
            <person name="Mottagui-Tabar S."/>
            <person name="Mulder N."/>
            <person name="Nakano N."/>
            <person name="Nakauchi H."/>
            <person name="Ng P."/>
            <person name="Nilsson R."/>
            <person name="Nishiguchi S."/>
            <person name="Nishikawa S."/>
            <person name="Nori F."/>
            <person name="Ohara O."/>
            <person name="Okazaki Y."/>
            <person name="Orlando V."/>
            <person name="Pang K.C."/>
            <person name="Pavan W.J."/>
            <person name="Pavesi G."/>
            <person name="Pesole G."/>
            <person name="Petrovsky N."/>
            <person name="Piazza S."/>
            <person name="Reed J."/>
            <person name="Reid J.F."/>
            <person name="Ring B.Z."/>
            <person name="Ringwald M."/>
            <person name="Rost B."/>
            <person name="Ruan Y."/>
            <person name="Salzberg S.L."/>
            <person name="Sandelin A."/>
            <person name="Schneider C."/>
            <person name="Schoenbach C."/>
            <person name="Sekiguchi K."/>
            <person name="Semple C.A."/>
            <person name="Seno S."/>
            <person name="Sessa L."/>
            <person name="Sheng Y."/>
            <person name="Shibata Y."/>
            <person name="Shimada H."/>
            <person name="Shimada K."/>
            <person name="Silva D."/>
            <person name="Sinclair B."/>
            <person name="Sperling S."/>
            <person name="Stupka E."/>
            <person name="Sugiura K."/>
            <person name="Sultana R."/>
            <person name="Takenaka Y."/>
            <person name="Taki K."/>
            <person name="Tammoja K."/>
            <person name="Tan S.L."/>
            <person name="Tang S."/>
            <person name="Taylor M.S."/>
            <person name="Tegner J."/>
            <person name="Teichmann S.A."/>
            <person name="Ueda H.R."/>
            <person name="van Nimwegen E."/>
            <person name="Verardo R."/>
            <person name="Wei C.L."/>
            <person name="Yagi K."/>
            <person name="Yamanishi H."/>
            <person name="Zabarovsky E."/>
            <person name="Zhu S."/>
            <person name="Zimmer A."/>
            <person name="Hide W."/>
            <person name="Bult C."/>
            <person name="Grimmond S.M."/>
            <person name="Teasdale R.D."/>
            <person name="Liu E.T."/>
            <person name="Brusic V."/>
            <person name="Quackenbush J."/>
            <person name="Wahlestedt C."/>
            <person name="Mattick J.S."/>
            <person name="Hume D.A."/>
            <person name="Kai C."/>
            <person name="Sasaki D."/>
            <person name="Tomaru Y."/>
            <person name="Fukuda S."/>
            <person name="Kanamori-Katayama M."/>
            <person name="Suzuki M."/>
            <person name="Aoki J."/>
            <person name="Arakawa T."/>
            <person name="Iida J."/>
            <person name="Imamura K."/>
            <person name="Itoh M."/>
            <person name="Kato T."/>
            <person name="Kawaji H."/>
            <person name="Kawagashira N."/>
            <person name="Kawashima T."/>
            <person name="Kojima M."/>
            <person name="Kondo S."/>
            <person name="Konno H."/>
            <person name="Nakano K."/>
            <person name="Ninomiya N."/>
            <person name="Nishio T."/>
            <person name="Okada M."/>
            <person name="Plessy C."/>
            <person name="Shibata K."/>
            <person name="Shiraki T."/>
            <person name="Suzuki S."/>
            <person name="Tagami M."/>
            <person name="Waki K."/>
            <person name="Watahiki A."/>
            <person name="Okamura-Oho Y."/>
            <person name="Suzuki H."/>
            <person name="Kawai J."/>
            <person name="Hayashizaki Y."/>
        </authorList>
    </citation>
    <scope>NUCLEOTIDE SEQUENCE [LARGE SCALE MRNA]</scope>
    <source>
        <strain>C57BL/6J</strain>
        <tissue>Embryo</tissue>
    </source>
</reference>
<reference key="2">
    <citation type="journal article" date="2004" name="Genome Res.">
        <title>The status, quality, and expansion of the NIH full-length cDNA project: the Mammalian Gene Collection (MGC).</title>
        <authorList>
            <consortium name="The MGC Project Team"/>
        </authorList>
    </citation>
    <scope>NUCLEOTIDE SEQUENCE [LARGE SCALE MRNA]</scope>
    <source>
        <strain>C57BL/6J</strain>
        <tissue>Brain</tissue>
    </source>
</reference>
<reference key="3">
    <citation type="journal article" date="2003" name="Gene Expr. Patterns">
        <title>Sexually dimorphic expression of multiple doublesex-related genes in the embryonic mouse gonad.</title>
        <authorList>
            <person name="Kim S."/>
            <person name="Kettlewell J.R."/>
            <person name="Anderson R.C."/>
            <person name="Bardwell V.J."/>
            <person name="Zarkower D."/>
        </authorList>
    </citation>
    <scope>DEVELOPMENTAL STAGE</scope>
</reference>
<reference key="4">
    <citation type="journal article" date="2012" name="Nature">
        <title>Mutations in DMRT3 affect locomotion in horses and spinal circuit function in mice.</title>
        <authorList>
            <person name="Andersson L.S."/>
            <person name="Larhammar M."/>
            <person name="Memic F."/>
            <person name="Wootz H."/>
            <person name="Schwochow D."/>
            <person name="Rubin C.-J."/>
            <person name="Patra K."/>
            <person name="Arnason T."/>
            <person name="Wellbring L."/>
            <person name="Hjalm G."/>
            <person name="Imsland F."/>
            <person name="Petersen J.L."/>
            <person name="McCue M.E."/>
            <person name="Mickelson J.R."/>
            <person name="Cothran G."/>
            <person name="Ahituv N."/>
            <person name="Roepstorff L."/>
            <person name="Mikko S."/>
            <person name="Vallstedt A."/>
            <person name="Lindgren G."/>
            <person name="Andersson L."/>
            <person name="Kullander K."/>
        </authorList>
    </citation>
    <scope>FUNCTION</scope>
    <scope>TISSUE SPECIFICITY</scope>
    <scope>DISRUPTION PHENOTYPE</scope>
</reference>
<gene>
    <name type="primary">Dmrt3</name>
</gene>
<name>DMRT3_MOUSE</name>
<comment type="function">
    <text evidence="6">Probable transcription factor that plays a role in configuring the spinal circuits controlling stride in vertebrates. Involved in neuronal specification within specific subdivision of spinal cord neurons and in the development of a coordinated locomotor network controlling limb movements. May regulate transcription during sexual development.</text>
</comment>
<comment type="subcellular location">
    <subcellularLocation>
        <location evidence="3">Nucleus</location>
    </subcellularLocation>
</comment>
<comment type="tissue specificity">
    <text evidence="6">Expressed in the ventral spinal cord, in a restrical population of neurons migrating ventrically in the developing spinal cord at 11.5 dpc.</text>
</comment>
<comment type="developmental stage">
    <text evidence="5">Expressed at 14.5 dpc in testis, kidney and bladder. Expression drops at 13.5 dpc in female gonads and is not detected at 15.5 dpc while it is expressed by Sertoli cells in testis.</text>
</comment>
<comment type="domain">
    <text evidence="1">DMA domain interacts with ubiquitin.</text>
</comment>
<comment type="disruption phenotype">
    <text evidence="6">Significantly increase of stride length and extension movements in all limbs. Mice have major difficulties running at higher velocities. In water, mice spend less time swimming and showed frequent twitching limb movements.</text>
</comment>
<comment type="miscellaneous">
    <text>DMRT3 is a marker for a subset of spinal cord neurons (dI6).</text>
</comment>
<comment type="similarity">
    <text evidence="7">Belongs to the DMRT family.</text>
</comment>
<comment type="online information" name="Protein Spotlight">
    <link uri="https://www.proteinspotlight.org/back_issues/154/"/>
    <text>A gait on the wildside - Issue 154 of November 2013</text>
</comment>
<proteinExistence type="evidence at transcript level"/>
<protein>
    <recommendedName>
        <fullName>Doublesex- and mab-3-related transcription factor 3</fullName>
    </recommendedName>
</protein>
<sequence length="476" mass="51518">MNGYGSPYLYMGGPVSQPPRAPLQRTPKCARCRNHGVLSWLKGHKRYCRFKDCTCEKCILIIERQRVMAAQVALRRQQANESLESLIPDSLRALPGPPPPGDAAATAATASQSSPASQASQPPAPPRPTAELAAAAALRWVAEPQPGTLPAQLAKPDLTEERVGDSSSTDNTAEAFSDKDTDQRSSPDVVKSKNCFTPESPEIVSVDEGGYAVQKNGGNPESCPDSPKYHAEQSHLLIEGPSGTVSLPFSLKANRPPLEVLKKIFPNQKPTVLELILKGCGGDLVSAVEVLLSSRSSAAGAERTAEESLVLPSSGHIFEHTLGSYPISSSKWSVGSAFRVPDTLRFSADSSNVVPNPLAVPLQHPFPQPPRYPLMLRNTLARNQSSPFLPNDVTLWNTMTLQQQYQLRSQYVSPFPSNSTSVFRSSPVLSSRTTEDPRISIPDDGCPIVTKQSIYTEDDYDERSDSSDSRILNTSS</sequence>
<dbReference type="EMBL" id="AF541936">
    <property type="protein sequence ID" value="AAN77230.1"/>
    <property type="molecule type" value="mRNA"/>
</dbReference>
<dbReference type="EMBL" id="BC052041">
    <property type="protein sequence ID" value="AAH52041.2"/>
    <property type="molecule type" value="mRNA"/>
</dbReference>
<dbReference type="CCDS" id="CCDS29718.1"/>
<dbReference type="RefSeq" id="NP_796334.2">
    <property type="nucleotide sequence ID" value="NM_177360.3"/>
</dbReference>
<dbReference type="RefSeq" id="XP_006527129.1">
    <property type="nucleotide sequence ID" value="XM_006527066.4"/>
</dbReference>
<dbReference type="SMR" id="Q80WT2"/>
<dbReference type="FunCoup" id="Q80WT2">
    <property type="interactions" value="1156"/>
</dbReference>
<dbReference type="STRING" id="10090.ENSMUSP00000046812"/>
<dbReference type="iPTMnet" id="Q80WT2"/>
<dbReference type="PhosphoSitePlus" id="Q80WT2"/>
<dbReference type="PaxDb" id="10090-ENSMUSP00000046812"/>
<dbReference type="ProteomicsDB" id="279388"/>
<dbReference type="Antibodypedia" id="23783">
    <property type="antibodies" value="156 antibodies from 24 providers"/>
</dbReference>
<dbReference type="DNASU" id="240590"/>
<dbReference type="Ensembl" id="ENSMUST00000048935.6">
    <property type="protein sequence ID" value="ENSMUSP00000046812.5"/>
    <property type="gene ID" value="ENSMUSG00000042372.6"/>
</dbReference>
<dbReference type="GeneID" id="240590"/>
<dbReference type="KEGG" id="mmu:240590"/>
<dbReference type="UCSC" id="uc008hbk.2">
    <property type="organism name" value="mouse"/>
</dbReference>
<dbReference type="AGR" id="MGI:2449470"/>
<dbReference type="CTD" id="58524"/>
<dbReference type="MGI" id="MGI:2449470">
    <property type="gene designation" value="Dmrt3"/>
</dbReference>
<dbReference type="VEuPathDB" id="HostDB:ENSMUSG00000042372"/>
<dbReference type="eggNOG" id="KOG3815">
    <property type="taxonomic scope" value="Eukaryota"/>
</dbReference>
<dbReference type="GeneTree" id="ENSGT00940000160420"/>
<dbReference type="HOGENOM" id="CLU_052449_1_0_1"/>
<dbReference type="InParanoid" id="Q80WT2"/>
<dbReference type="OMA" id="CPIVTKQ"/>
<dbReference type="OrthoDB" id="5842031at2759"/>
<dbReference type="PhylomeDB" id="Q80WT2"/>
<dbReference type="TreeFam" id="TF317837"/>
<dbReference type="BioGRID-ORCS" id="240590">
    <property type="hits" value="5 hits in 78 CRISPR screens"/>
</dbReference>
<dbReference type="PRO" id="PR:Q80WT2"/>
<dbReference type="Proteomes" id="UP000000589">
    <property type="component" value="Chromosome 19"/>
</dbReference>
<dbReference type="RNAct" id="Q80WT2">
    <property type="molecule type" value="protein"/>
</dbReference>
<dbReference type="Bgee" id="ENSMUSG00000042372">
    <property type="expression patterns" value="Expressed in lacrimal gland and 56 other cell types or tissues"/>
</dbReference>
<dbReference type="ExpressionAtlas" id="Q80WT2">
    <property type="expression patterns" value="baseline and differential"/>
</dbReference>
<dbReference type="GO" id="GO:0005634">
    <property type="term" value="C:nucleus"/>
    <property type="evidence" value="ECO:0000314"/>
    <property type="project" value="MGI"/>
</dbReference>
<dbReference type="GO" id="GO:0046872">
    <property type="term" value="F:metal ion binding"/>
    <property type="evidence" value="ECO:0007669"/>
    <property type="project" value="UniProtKB-KW"/>
</dbReference>
<dbReference type="GO" id="GO:0043565">
    <property type="term" value="F:sequence-specific DNA binding"/>
    <property type="evidence" value="ECO:0000314"/>
    <property type="project" value="MGI"/>
</dbReference>
<dbReference type="GO" id="GO:1990837">
    <property type="term" value="F:sequence-specific double-stranded DNA binding"/>
    <property type="evidence" value="ECO:0007669"/>
    <property type="project" value="Ensembl"/>
</dbReference>
<dbReference type="GO" id="GO:0007628">
    <property type="term" value="P:adult walking behavior"/>
    <property type="evidence" value="ECO:0000315"/>
    <property type="project" value="MGI"/>
</dbReference>
<dbReference type="GO" id="GO:0046661">
    <property type="term" value="P:male sex differentiation"/>
    <property type="evidence" value="ECO:0000315"/>
    <property type="project" value="MGI"/>
</dbReference>
<dbReference type="GO" id="GO:0006355">
    <property type="term" value="P:regulation of DNA-templated transcription"/>
    <property type="evidence" value="ECO:0007669"/>
    <property type="project" value="InterPro"/>
</dbReference>
<dbReference type="GO" id="GO:0042487">
    <property type="term" value="P:regulation of odontogenesis of dentin-containing tooth"/>
    <property type="evidence" value="ECO:0000315"/>
    <property type="project" value="MGI"/>
</dbReference>
<dbReference type="GO" id="GO:0019226">
    <property type="term" value="P:transmission of nerve impulse"/>
    <property type="evidence" value="ECO:0000315"/>
    <property type="project" value="MGI"/>
</dbReference>
<dbReference type="GO" id="GO:0021521">
    <property type="term" value="P:ventral spinal cord interneuron specification"/>
    <property type="evidence" value="ECO:0000315"/>
    <property type="project" value="MGI"/>
</dbReference>
<dbReference type="CDD" id="cd14419">
    <property type="entry name" value="CUE_DMA_DMRTA3"/>
    <property type="match status" value="1"/>
</dbReference>
<dbReference type="FunFam" id="4.10.1040.10:FF:000001">
    <property type="entry name" value="doublesex- and mab-3-related transcription factor 1"/>
    <property type="match status" value="1"/>
</dbReference>
<dbReference type="Gene3D" id="4.10.1040.10">
    <property type="entry name" value="DM DNA-binding domain"/>
    <property type="match status" value="1"/>
</dbReference>
<dbReference type="InterPro" id="IPR001275">
    <property type="entry name" value="DM_DNA-bd"/>
</dbReference>
<dbReference type="InterPro" id="IPR036407">
    <property type="entry name" value="DM_DNA-bd_sf"/>
</dbReference>
<dbReference type="InterPro" id="IPR005173">
    <property type="entry name" value="DMA"/>
</dbReference>
<dbReference type="InterPro" id="IPR026607">
    <property type="entry name" value="DMRT"/>
</dbReference>
<dbReference type="InterPro" id="IPR009060">
    <property type="entry name" value="UBA-like_sf"/>
</dbReference>
<dbReference type="PANTHER" id="PTHR12322">
    <property type="entry name" value="DOUBLESEX AND MAB-3 RELATED TRANSCRIPTION FACTOR DMRT"/>
    <property type="match status" value="1"/>
</dbReference>
<dbReference type="PANTHER" id="PTHR12322:SF120">
    <property type="entry name" value="DOUBLESEX- AND MAB-3-RELATED TRANSCRIPTION FACTOR 3"/>
    <property type="match status" value="1"/>
</dbReference>
<dbReference type="Pfam" id="PF00751">
    <property type="entry name" value="DM"/>
    <property type="match status" value="1"/>
</dbReference>
<dbReference type="Pfam" id="PF03474">
    <property type="entry name" value="DMA"/>
    <property type="match status" value="1"/>
</dbReference>
<dbReference type="SMART" id="SM00301">
    <property type="entry name" value="DM"/>
    <property type="match status" value="1"/>
</dbReference>
<dbReference type="SUPFAM" id="SSF82927">
    <property type="entry name" value="Cysteine-rich DNA binding domain, (DM domain)"/>
    <property type="match status" value="1"/>
</dbReference>
<dbReference type="SUPFAM" id="SSF46934">
    <property type="entry name" value="UBA-like"/>
    <property type="match status" value="1"/>
</dbReference>
<dbReference type="PROSITE" id="PS40000">
    <property type="entry name" value="DM_1"/>
    <property type="match status" value="1"/>
</dbReference>
<dbReference type="PROSITE" id="PS50809">
    <property type="entry name" value="DM_2"/>
    <property type="match status" value="1"/>
</dbReference>
<accession>Q80WT2</accession>
<accession>Q8CGX1</accession>
<feature type="chain" id="PRO_0000277795" description="Doublesex- and mab-3-related transcription factor 3">
    <location>
        <begin position="1"/>
        <end position="476"/>
    </location>
</feature>
<feature type="domain" description="DMA" evidence="2">
    <location>
        <begin position="255"/>
        <end position="290"/>
    </location>
</feature>
<feature type="DNA-binding region" description="DM" evidence="3">
    <location>
        <begin position="29"/>
        <end position="76"/>
    </location>
</feature>
<feature type="region of interest" description="Disordered" evidence="4">
    <location>
        <begin position="89"/>
        <end position="130"/>
    </location>
</feature>
<feature type="region of interest" description="Disordered" evidence="4">
    <location>
        <begin position="147"/>
        <end position="195"/>
    </location>
</feature>
<feature type="region of interest" description="Disordered" evidence="4">
    <location>
        <begin position="418"/>
        <end position="476"/>
    </location>
</feature>
<feature type="compositionally biased region" description="Low complexity" evidence="4">
    <location>
        <begin position="102"/>
        <end position="121"/>
    </location>
</feature>
<feature type="compositionally biased region" description="Polar residues" evidence="4">
    <location>
        <begin position="165"/>
        <end position="174"/>
    </location>
</feature>
<feature type="compositionally biased region" description="Basic and acidic residues" evidence="4">
    <location>
        <begin position="176"/>
        <end position="185"/>
    </location>
</feature>
<feature type="compositionally biased region" description="Polar residues" evidence="4">
    <location>
        <begin position="418"/>
        <end position="432"/>
    </location>
</feature>
<feature type="sequence conflict" description="In Ref. 1; AAN77230." evidence="7" ref="1">
    <original>A</original>
    <variation>D</variation>
    <location>
        <position position="93"/>
    </location>
</feature>
<feature type="sequence conflict" description="In Ref. 1; AAN77230." evidence="7" ref="1">
    <original>A</original>
    <variation>T</variation>
    <location>
        <position position="301"/>
    </location>
</feature>
<feature type="sequence conflict" description="In Ref. 1; AAN77230." evidence="7" ref="1">
    <original>P</original>
    <variation>H</variation>
    <location>
        <position position="361"/>
    </location>
</feature>
<evidence type="ECO:0000250" key="1">
    <source>
        <dbReference type="UniProtKB" id="Q9NQL9"/>
    </source>
</evidence>
<evidence type="ECO:0000255" key="2"/>
<evidence type="ECO:0000255" key="3">
    <source>
        <dbReference type="PROSITE-ProRule" id="PRU00070"/>
    </source>
</evidence>
<evidence type="ECO:0000256" key="4">
    <source>
        <dbReference type="SAM" id="MobiDB-lite"/>
    </source>
</evidence>
<evidence type="ECO:0000269" key="5">
    <source>
    </source>
</evidence>
<evidence type="ECO:0000269" key="6">
    <source>
    </source>
</evidence>
<evidence type="ECO:0000305" key="7"/>